<evidence type="ECO:0000250" key="1">
    <source>
        <dbReference type="UniProtKB" id="O07013"/>
    </source>
</evidence>
<evidence type="ECO:0000255" key="2"/>
<evidence type="ECO:0000269" key="3">
    <source>
    </source>
</evidence>
<evidence type="ECO:0000303" key="4">
    <source>
    </source>
</evidence>
<evidence type="ECO:0000305" key="5"/>
<evidence type="ECO:0007744" key="6">
    <source>
        <dbReference type="PDB" id="1R8L"/>
    </source>
</evidence>
<evidence type="ECO:0007744" key="7">
    <source>
        <dbReference type="PDB" id="1UR0"/>
    </source>
</evidence>
<evidence type="ECO:0007744" key="8">
    <source>
        <dbReference type="PDB" id="1UR4"/>
    </source>
</evidence>
<evidence type="ECO:0007829" key="9">
    <source>
        <dbReference type="PDB" id="1UR0"/>
    </source>
</evidence>
<evidence type="ECO:0007829" key="10">
    <source>
        <dbReference type="PDB" id="1UR4"/>
    </source>
</evidence>
<evidence type="ECO:0007829" key="11">
    <source>
        <dbReference type="PDB" id="2GFT"/>
    </source>
</evidence>
<name>GANB_BACLD</name>
<sequence length="424" mass="46225">MKNVLAVFVVLIFVLGAFGTSGPAEAARDSGTAKSGLYVEKVSGLRKDFIKGVDVSSIIALEESGVAFYNESGKKQDIFKTLKEAGVNYVRVRIWNDPYDANGNGYGGGNNDLEKAIQIGKRATANGMKLLADFHYSDFWADPAKQKAPKAWANLNFEDKKTALYQYTKQSLKAMKAAGIDIGMVQVGNETNGGLAGETDWAKMSQLFNAGSQAVRETDSNILVALHFTNPETSGRYAWIAETLHRHHVDYDVFASSYYPFWHGTLKNLTSVLTSVADTYGKKVMVAETSYTYTAEDGDGHGNTAPKNGQTLNNPVTVQGQANAVRDVIQAVSDVGEAGIGVFYWEPAWIPVGPAHRLEKNKALWETYGSGWATSYAAEYDPEDAGKWFGGSAVDNQALFDFKGRPLPSLHVFQYVDTGTPFKN</sequence>
<protein>
    <recommendedName>
        <fullName evidence="4">Endo-beta-1,4-galactanase</fullName>
        <shortName evidence="5">Galactanase</shortName>
        <ecNumber evidence="3">3.2.1.-</ecNumber>
    </recommendedName>
    <alternativeName>
        <fullName evidence="1">Arabinogalactan endo-beta-1,4-galactanase</fullName>
        <ecNumber evidence="1">3.2.1.89</ecNumber>
    </alternativeName>
    <alternativeName>
        <fullName evidence="4">BLGAL</fullName>
    </alternativeName>
</protein>
<gene>
    <name type="primary">ganB</name>
    <name type="synonym">galA</name>
    <name type="synonym">yvfO</name>
    <name type="ordered locus">BLi04276</name>
    <name type="ordered locus">BL00263</name>
</gene>
<dbReference type="EC" id="3.2.1.-" evidence="3"/>
<dbReference type="EC" id="3.2.1.89" evidence="1"/>
<dbReference type="EMBL" id="AE017333">
    <property type="protein sequence ID" value="AAU43089.1"/>
    <property type="molecule type" value="Genomic_DNA"/>
</dbReference>
<dbReference type="EMBL" id="CP000002">
    <property type="protein sequence ID" value="AAU25711.1"/>
    <property type="status" value="ALT_INIT"/>
    <property type="molecule type" value="Genomic_DNA"/>
</dbReference>
<dbReference type="RefSeq" id="WP_011201775.1">
    <property type="nucleotide sequence ID" value="NC_006322.1"/>
</dbReference>
<dbReference type="PDB" id="1R8L">
    <property type="method" value="X-ray"/>
    <property type="resolution" value="2.60 A"/>
    <property type="chains" value="A/B=26-424"/>
</dbReference>
<dbReference type="PDB" id="1UR0">
    <property type="method" value="X-ray"/>
    <property type="resolution" value="2.50 A"/>
    <property type="chains" value="A/B=26-424"/>
</dbReference>
<dbReference type="PDB" id="1UR4">
    <property type="method" value="X-ray"/>
    <property type="resolution" value="2.20 A"/>
    <property type="chains" value="A/B=26-424"/>
</dbReference>
<dbReference type="PDB" id="2CCR">
    <property type="method" value="X-ray"/>
    <property type="resolution" value="2.30 A"/>
    <property type="chains" value="A/B=26-424"/>
</dbReference>
<dbReference type="PDB" id="2GFT">
    <property type="method" value="X-ray"/>
    <property type="resolution" value="2.30 A"/>
    <property type="chains" value="A/B=26-424"/>
</dbReference>
<dbReference type="PDB" id="2J74">
    <property type="method" value="X-ray"/>
    <property type="resolution" value="2.60 A"/>
    <property type="chains" value="A/B=28-424"/>
</dbReference>
<dbReference type="PDBsum" id="1R8L"/>
<dbReference type="PDBsum" id="1UR0"/>
<dbReference type="PDBsum" id="1UR4"/>
<dbReference type="PDBsum" id="2CCR"/>
<dbReference type="PDBsum" id="2GFT"/>
<dbReference type="PDBsum" id="2J74"/>
<dbReference type="SMR" id="Q65CX5"/>
<dbReference type="STRING" id="279010.BL00263"/>
<dbReference type="DrugBank" id="DB04248">
    <property type="generic name" value="beta-(1-&gt;4)-galactotriose"/>
</dbReference>
<dbReference type="DrugBank" id="DB02743">
    <property type="generic name" value="beta-D-galactopyranosyl-(1-&gt;4)-beta-D-galactopyranose"/>
</dbReference>
<dbReference type="DrugBank" id="DB02327">
    <property type="generic name" value="Triethylene glycol"/>
</dbReference>
<dbReference type="CAZy" id="GH53">
    <property type="family name" value="Glycoside Hydrolase Family 53"/>
</dbReference>
<dbReference type="KEGG" id="bld:BLi04276"/>
<dbReference type="KEGG" id="bli:BL00263"/>
<dbReference type="PATRIC" id="fig|279010.13.peg.4362"/>
<dbReference type="eggNOG" id="COG3867">
    <property type="taxonomic scope" value="Bacteria"/>
</dbReference>
<dbReference type="HOGENOM" id="CLU_011259_2_0_9"/>
<dbReference type="BRENDA" id="3.2.1.89">
    <property type="organism ID" value="669"/>
</dbReference>
<dbReference type="EvolutionaryTrace" id="Q65CX5"/>
<dbReference type="Proteomes" id="UP000000606">
    <property type="component" value="Chromosome"/>
</dbReference>
<dbReference type="GO" id="GO:0031218">
    <property type="term" value="F:arabinogalactan endo-1,4-beta-galactosidase activity"/>
    <property type="evidence" value="ECO:0007669"/>
    <property type="project" value="UniProtKB-EC"/>
</dbReference>
<dbReference type="GO" id="GO:0015926">
    <property type="term" value="F:glucosidase activity"/>
    <property type="evidence" value="ECO:0007669"/>
    <property type="project" value="InterPro"/>
</dbReference>
<dbReference type="GO" id="GO:0046872">
    <property type="term" value="F:metal ion binding"/>
    <property type="evidence" value="ECO:0007669"/>
    <property type="project" value="UniProtKB-KW"/>
</dbReference>
<dbReference type="GO" id="GO:0045490">
    <property type="term" value="P:pectin catabolic process"/>
    <property type="evidence" value="ECO:0007669"/>
    <property type="project" value="TreeGrafter"/>
</dbReference>
<dbReference type="Gene3D" id="3.20.20.80">
    <property type="entry name" value="Glycosidases"/>
    <property type="match status" value="1"/>
</dbReference>
<dbReference type="InterPro" id="IPR011683">
    <property type="entry name" value="Glyco_hydro_53"/>
</dbReference>
<dbReference type="InterPro" id="IPR017853">
    <property type="entry name" value="Glycoside_hydrolase_SF"/>
</dbReference>
<dbReference type="PANTHER" id="PTHR34983">
    <property type="entry name" value="ARABINOGALACTAN ENDO-BETA-1,4-GALACTANASE A"/>
    <property type="match status" value="1"/>
</dbReference>
<dbReference type="PANTHER" id="PTHR34983:SF2">
    <property type="entry name" value="ENDO-BETA-1,4-GALACTANASE"/>
    <property type="match status" value="1"/>
</dbReference>
<dbReference type="Pfam" id="PF07745">
    <property type="entry name" value="Glyco_hydro_53"/>
    <property type="match status" value="1"/>
</dbReference>
<dbReference type="SUPFAM" id="SSF51445">
    <property type="entry name" value="(Trans)glycosidases"/>
    <property type="match status" value="1"/>
</dbReference>
<organism>
    <name type="scientific">Bacillus licheniformis (strain ATCC 14580 / DSM 13 / JCM 2505 / CCUG 7422 / NBRC 12200 / NCIMB 9375 / NCTC 10341 / NRRL NRS-1264 / Gibson 46)</name>
    <dbReference type="NCBI Taxonomy" id="279010"/>
    <lineage>
        <taxon>Bacteria</taxon>
        <taxon>Bacillati</taxon>
        <taxon>Bacillota</taxon>
        <taxon>Bacilli</taxon>
        <taxon>Bacillales</taxon>
        <taxon>Bacillaceae</taxon>
        <taxon>Bacillus</taxon>
    </lineage>
</organism>
<feature type="signal peptide" evidence="2">
    <location>
        <begin position="1"/>
        <end position="26"/>
    </location>
</feature>
<feature type="chain" id="PRO_0000371562" description="Endo-beta-1,4-galactanase">
    <location>
        <begin position="27"/>
        <end position="424"/>
    </location>
</feature>
<feature type="active site" description="Proton donor" evidence="5">
    <location>
        <position position="190"/>
    </location>
</feature>
<feature type="active site" description="Nucleophile" evidence="5">
    <location>
        <position position="288"/>
    </location>
</feature>
<feature type="binding site" evidence="3">
    <location>
        <begin position="142"/>
        <end position="145"/>
    </location>
    <ligand>
        <name>substrate</name>
    </ligand>
</feature>
<feature type="binding site" evidence="3">
    <location>
        <begin position="229"/>
        <end position="230"/>
    </location>
    <ligand>
        <name>substrate</name>
    </ligand>
</feature>
<feature type="binding site" evidence="3">
    <location>
        <position position="263"/>
    </location>
    <ligand>
        <name>substrate</name>
    </ligand>
</feature>
<feature type="binding site" evidence="3">
    <location>
        <position position="292"/>
    </location>
    <ligand>
        <name>substrate</name>
    </ligand>
</feature>
<feature type="binding site" evidence="3 6 7 8">
    <location>
        <position position="297"/>
    </location>
    <ligand>
        <name>Ca(2+)</name>
        <dbReference type="ChEBI" id="CHEBI:29108"/>
    </ligand>
</feature>
<feature type="binding site" evidence="3 7 8">
    <location>
        <position position="299"/>
    </location>
    <ligand>
        <name>Ca(2+)</name>
        <dbReference type="ChEBI" id="CHEBI:29108"/>
    </ligand>
</feature>
<feature type="binding site" evidence="3 6 7 8">
    <location>
        <position position="301"/>
    </location>
    <ligand>
        <name>Ca(2+)</name>
        <dbReference type="ChEBI" id="CHEBI:29108"/>
    </ligand>
</feature>
<feature type="binding site" evidence="3 6 7 8">
    <location>
        <position position="303"/>
    </location>
    <ligand>
        <name>Ca(2+)</name>
        <dbReference type="ChEBI" id="CHEBI:29108"/>
    </ligand>
</feature>
<feature type="binding site" evidence="3">
    <location>
        <position position="307"/>
    </location>
    <ligand>
        <name>substrate</name>
    </ligand>
</feature>
<feature type="binding site" evidence="3">
    <location>
        <position position="384"/>
    </location>
    <ligand>
        <name>substrate</name>
    </ligand>
</feature>
<feature type="binding site" evidence="3 6 7 8">
    <location>
        <position position="392"/>
    </location>
    <ligand>
        <name>Ca(2+)</name>
        <dbReference type="ChEBI" id="CHEBI:29108"/>
    </ligand>
</feature>
<feature type="binding site" evidence="3 6 7 8">
    <location>
        <position position="395"/>
    </location>
    <ligand>
        <name>Ca(2+)</name>
        <dbReference type="ChEBI" id="CHEBI:29108"/>
    </ligand>
</feature>
<feature type="strand" evidence="10">
    <location>
        <begin position="50"/>
        <end position="54"/>
    </location>
</feature>
<feature type="helix" evidence="10">
    <location>
        <begin position="58"/>
        <end position="63"/>
    </location>
</feature>
<feature type="strand" evidence="11">
    <location>
        <begin position="73"/>
        <end position="75"/>
    </location>
</feature>
<feature type="helix" evidence="10">
    <location>
        <begin position="78"/>
        <end position="84"/>
    </location>
</feature>
<feature type="strand" evidence="10">
    <location>
        <begin position="89"/>
        <end position="94"/>
    </location>
</feature>
<feature type="helix" evidence="10">
    <location>
        <begin position="113"/>
        <end position="125"/>
    </location>
</feature>
<feature type="strand" evidence="10">
    <location>
        <begin position="129"/>
        <end position="134"/>
    </location>
</feature>
<feature type="strand" evidence="10">
    <location>
        <begin position="136"/>
        <end position="139"/>
    </location>
</feature>
<feature type="strand" evidence="10">
    <location>
        <begin position="142"/>
        <end position="144"/>
    </location>
</feature>
<feature type="helix" evidence="10">
    <location>
        <begin position="150"/>
        <end position="152"/>
    </location>
</feature>
<feature type="helix" evidence="10">
    <location>
        <begin position="157"/>
        <end position="177"/>
    </location>
</feature>
<feature type="strand" evidence="10">
    <location>
        <begin position="182"/>
        <end position="190"/>
    </location>
</feature>
<feature type="helix" evidence="10">
    <location>
        <begin position="201"/>
        <end position="218"/>
    </location>
</feature>
<feature type="strand" evidence="10">
    <location>
        <begin position="222"/>
        <end position="228"/>
    </location>
</feature>
<feature type="helix" evidence="10">
    <location>
        <begin position="236"/>
        <end position="246"/>
    </location>
</feature>
<feature type="strand" evidence="10">
    <location>
        <begin position="252"/>
        <end position="258"/>
    </location>
</feature>
<feature type="turn" evidence="10">
    <location>
        <begin position="260"/>
        <end position="262"/>
    </location>
</feature>
<feature type="helix" evidence="10">
    <location>
        <begin position="266"/>
        <end position="280"/>
    </location>
</feature>
<feature type="strand" evidence="10">
    <location>
        <begin position="283"/>
        <end position="289"/>
    </location>
</feature>
<feature type="strand" evidence="10">
    <location>
        <begin position="298"/>
        <end position="301"/>
    </location>
</feature>
<feature type="strand" evidence="10">
    <location>
        <begin position="304"/>
        <end position="306"/>
    </location>
</feature>
<feature type="helix" evidence="10">
    <location>
        <begin position="318"/>
        <end position="333"/>
    </location>
</feature>
<feature type="strand" evidence="10">
    <location>
        <begin position="339"/>
        <end position="345"/>
    </location>
</feature>
<feature type="helix" evidence="10">
    <location>
        <begin position="355"/>
        <end position="357"/>
    </location>
</feature>
<feature type="helix" evidence="10">
    <location>
        <begin position="358"/>
        <end position="368"/>
    </location>
</feature>
<feature type="strand" evidence="10">
    <location>
        <begin position="371"/>
        <end position="373"/>
    </location>
</feature>
<feature type="helix" evidence="10">
    <location>
        <begin position="375"/>
        <end position="377"/>
    </location>
</feature>
<feature type="turn" evidence="10">
    <location>
        <begin position="378"/>
        <end position="380"/>
    </location>
</feature>
<feature type="turn" evidence="10">
    <location>
        <begin position="382"/>
        <end position="384"/>
    </location>
</feature>
<feature type="helix" evidence="10">
    <location>
        <begin position="385"/>
        <end position="388"/>
    </location>
</feature>
<feature type="helix" evidence="10">
    <location>
        <begin position="395"/>
        <end position="397"/>
    </location>
</feature>
<feature type="strand" evidence="9">
    <location>
        <begin position="398"/>
        <end position="400"/>
    </location>
</feature>
<feature type="helix" evidence="10">
    <location>
        <begin position="408"/>
        <end position="411"/>
    </location>
</feature>
<feature type="helix" evidence="10">
    <location>
        <begin position="412"/>
        <end position="418"/>
    </location>
</feature>
<accession>Q65CX5</accession>
<accession>Q62NF0</accession>
<keyword id="KW-0002">3D-structure</keyword>
<keyword id="KW-0106">Calcium</keyword>
<keyword id="KW-0326">Glycosidase</keyword>
<keyword id="KW-0378">Hydrolase</keyword>
<keyword id="KW-0479">Metal-binding</keyword>
<keyword id="KW-1185">Reference proteome</keyword>
<keyword id="KW-0732">Signal</keyword>
<proteinExistence type="evidence at protein level"/>
<comment type="function">
    <text evidence="1 3">Involved in galactan degradation (PubMed:15312766). Degrades arabinose-free galactan to galactooligosaccharides, producing galactotetraose as the main product along with galactotriose, galactobiose, and galactose (PubMed:15312766). May hydrolyze the beta-1,4-galactan linkages of the galactan portion of arabinogalactan type I, a pectic plant polysaccharide from which most of the arabinose has been removed (By similarity).</text>
</comment>
<comment type="catalytic activity">
    <reaction evidence="1">
        <text>The enzyme specifically hydrolyzes (1-&gt;4)-beta-D-galactosidic linkages in type I arabinogalactans.</text>
        <dbReference type="EC" id="3.2.1.89"/>
    </reaction>
</comment>
<comment type="cofactor">
    <cofactor evidence="3">
        <name>Ca(2+)</name>
        <dbReference type="ChEBI" id="CHEBI:29108"/>
    </cofactor>
    <text evidence="3">Binds 1 Ca(2+) ion per subunit.</text>
</comment>
<comment type="similarity">
    <text evidence="5">Belongs to the glycosyl hydrolase 53 family.</text>
</comment>
<comment type="sequence caution" evidence="5">
    <conflict type="erroneous initiation">
        <sequence resource="EMBL-CDS" id="AAU25711"/>
    </conflict>
</comment>
<reference key="1">
    <citation type="journal article" date="2004" name="J. Mol. Microbiol. Biotechnol.">
        <title>The complete genome sequence of Bacillus licheniformis DSM13, an organism with great industrial potential.</title>
        <authorList>
            <person name="Veith B."/>
            <person name="Herzberg C."/>
            <person name="Steckel S."/>
            <person name="Feesche J."/>
            <person name="Maurer K.H."/>
            <person name="Ehrenreich P."/>
            <person name="Baeumer S."/>
            <person name="Henne A."/>
            <person name="Liesegang H."/>
            <person name="Merkl R."/>
            <person name="Ehrenreich A."/>
            <person name="Gottschalk G."/>
        </authorList>
    </citation>
    <scope>NUCLEOTIDE SEQUENCE [LARGE SCALE GENOMIC DNA]</scope>
    <source>
        <strain>ATCC 14580 / DSM 13 / JCM 2505 / CCUG 7422 / NBRC 12200 / NCIMB 9375 / NCTC 10341 / NRRL NRS-1264 / Gibson 46</strain>
    </source>
</reference>
<reference key="2">
    <citation type="journal article" date="2004" name="Genome Biol.">
        <title>Complete genome sequence of the industrial bacterium Bacillus licheniformis and comparisons with closely related Bacillus species.</title>
        <authorList>
            <person name="Rey M.W."/>
            <person name="Ramaiya P."/>
            <person name="Nelson B.A."/>
            <person name="Brody-Karpin S.D."/>
            <person name="Zaretsky E.J."/>
            <person name="Tang M."/>
            <person name="Lopez de Leon A."/>
            <person name="Xiang H."/>
            <person name="Gusti V."/>
            <person name="Clausen I.G."/>
            <person name="Olsen P.B."/>
            <person name="Rasmussen M.D."/>
            <person name="Andersen J.T."/>
            <person name="Joergensen P.L."/>
            <person name="Larsen T.S."/>
            <person name="Sorokin A."/>
            <person name="Bolotin A."/>
            <person name="Lapidus A."/>
            <person name="Galleron N."/>
            <person name="Ehrlich S.D."/>
            <person name="Berka R.M."/>
        </authorList>
    </citation>
    <scope>NUCLEOTIDE SEQUENCE [LARGE SCALE GENOMIC DNA]</scope>
    <source>
        <strain>ATCC 14580 / DSM 13 / JCM 2505 / CCUG 7422 / NBRC 12200 / NCIMB 9375 / NCTC 10341 / NRRL NRS-1264 / Gibson 46</strain>
    </source>
</reference>
<reference evidence="6 7 8" key="3">
    <citation type="journal article" date="2004" name="J. Mol. Biol.">
        <title>The structure of endo-beta-1,4-galactanase from Bacillus licheniformis in complex with two oligosaccharide products.</title>
        <authorList>
            <person name="Ryttersgaard C."/>
            <person name="Le Nours J."/>
            <person name="Lo Leggio L."/>
            <person name="Joergensen C.T."/>
            <person name="Christensen L.L."/>
            <person name="Bjoernvad M."/>
            <person name="Larsen S."/>
        </authorList>
    </citation>
    <scope>X-RAY CRYSTALLOGRAPHY (2.2 ANGSTROMS) OF 28-424 IN COMPLEXES WITH CALCIUM IONS; GALACTOBIOSE AND GALACTOTRIOSE</scope>
    <scope>FUNCTION</scope>
    <scope>COFACTOR</scope>
</reference>